<accession>Q0HUI2</accession>
<sequence length="158" mass="17718">MTELKLIHIFTDGSCLGNPGPGGYGIVMNYKGHTKEMSDGFALTTNNRMELLAPIVALEALKEPCKVILTSDSQYMRQGITTWIHGWKKKGWMTSNRTPVKNVDLWKRLDKAAQLHHIDWRWVKGHAGHAENERCDQLARAAAEASPTQIDEGYQADS</sequence>
<gene>
    <name evidence="1" type="primary">rnhA</name>
    <name type="ordered locus">Shewmr7_2235</name>
</gene>
<evidence type="ECO:0000255" key="1">
    <source>
        <dbReference type="HAMAP-Rule" id="MF_00042"/>
    </source>
</evidence>
<evidence type="ECO:0000255" key="2">
    <source>
        <dbReference type="PROSITE-ProRule" id="PRU00408"/>
    </source>
</evidence>
<keyword id="KW-0963">Cytoplasm</keyword>
<keyword id="KW-0255">Endonuclease</keyword>
<keyword id="KW-0378">Hydrolase</keyword>
<keyword id="KW-0460">Magnesium</keyword>
<keyword id="KW-0479">Metal-binding</keyword>
<keyword id="KW-0540">Nuclease</keyword>
<organism>
    <name type="scientific">Shewanella sp. (strain MR-7)</name>
    <dbReference type="NCBI Taxonomy" id="60481"/>
    <lineage>
        <taxon>Bacteria</taxon>
        <taxon>Pseudomonadati</taxon>
        <taxon>Pseudomonadota</taxon>
        <taxon>Gammaproteobacteria</taxon>
        <taxon>Alteromonadales</taxon>
        <taxon>Shewanellaceae</taxon>
        <taxon>Shewanella</taxon>
    </lineage>
</organism>
<name>RNH_SHESR</name>
<dbReference type="EC" id="3.1.26.4" evidence="1"/>
<dbReference type="EMBL" id="CP000444">
    <property type="protein sequence ID" value="ABI43223.1"/>
    <property type="molecule type" value="Genomic_DNA"/>
</dbReference>
<dbReference type="SMR" id="Q0HUI2"/>
<dbReference type="KEGG" id="shm:Shewmr7_2235"/>
<dbReference type="HOGENOM" id="CLU_030894_6_0_6"/>
<dbReference type="GO" id="GO:0005737">
    <property type="term" value="C:cytoplasm"/>
    <property type="evidence" value="ECO:0007669"/>
    <property type="project" value="UniProtKB-SubCell"/>
</dbReference>
<dbReference type="GO" id="GO:0000287">
    <property type="term" value="F:magnesium ion binding"/>
    <property type="evidence" value="ECO:0007669"/>
    <property type="project" value="UniProtKB-UniRule"/>
</dbReference>
<dbReference type="GO" id="GO:0003676">
    <property type="term" value="F:nucleic acid binding"/>
    <property type="evidence" value="ECO:0007669"/>
    <property type="project" value="InterPro"/>
</dbReference>
<dbReference type="GO" id="GO:0004523">
    <property type="term" value="F:RNA-DNA hybrid ribonuclease activity"/>
    <property type="evidence" value="ECO:0007669"/>
    <property type="project" value="UniProtKB-UniRule"/>
</dbReference>
<dbReference type="GO" id="GO:0043137">
    <property type="term" value="P:DNA replication, removal of RNA primer"/>
    <property type="evidence" value="ECO:0007669"/>
    <property type="project" value="TreeGrafter"/>
</dbReference>
<dbReference type="CDD" id="cd09278">
    <property type="entry name" value="RNase_HI_prokaryote_like"/>
    <property type="match status" value="1"/>
</dbReference>
<dbReference type="FunFam" id="3.30.420.10:FF:000008">
    <property type="entry name" value="Ribonuclease H"/>
    <property type="match status" value="1"/>
</dbReference>
<dbReference type="Gene3D" id="3.30.420.10">
    <property type="entry name" value="Ribonuclease H-like superfamily/Ribonuclease H"/>
    <property type="match status" value="1"/>
</dbReference>
<dbReference type="HAMAP" id="MF_00042">
    <property type="entry name" value="RNase_H"/>
    <property type="match status" value="1"/>
</dbReference>
<dbReference type="InterPro" id="IPR050092">
    <property type="entry name" value="RNase_H"/>
</dbReference>
<dbReference type="InterPro" id="IPR012337">
    <property type="entry name" value="RNaseH-like_sf"/>
</dbReference>
<dbReference type="InterPro" id="IPR002156">
    <property type="entry name" value="RNaseH_domain"/>
</dbReference>
<dbReference type="InterPro" id="IPR036397">
    <property type="entry name" value="RNaseH_sf"/>
</dbReference>
<dbReference type="InterPro" id="IPR022892">
    <property type="entry name" value="RNaseHI"/>
</dbReference>
<dbReference type="NCBIfam" id="NF001236">
    <property type="entry name" value="PRK00203.1"/>
    <property type="match status" value="1"/>
</dbReference>
<dbReference type="PANTHER" id="PTHR10642">
    <property type="entry name" value="RIBONUCLEASE H1"/>
    <property type="match status" value="1"/>
</dbReference>
<dbReference type="PANTHER" id="PTHR10642:SF26">
    <property type="entry name" value="RIBONUCLEASE H1"/>
    <property type="match status" value="1"/>
</dbReference>
<dbReference type="Pfam" id="PF00075">
    <property type="entry name" value="RNase_H"/>
    <property type="match status" value="1"/>
</dbReference>
<dbReference type="SUPFAM" id="SSF53098">
    <property type="entry name" value="Ribonuclease H-like"/>
    <property type="match status" value="1"/>
</dbReference>
<dbReference type="PROSITE" id="PS50879">
    <property type="entry name" value="RNASE_H_1"/>
    <property type="match status" value="1"/>
</dbReference>
<comment type="function">
    <text evidence="1">Endonuclease that specifically degrades the RNA of RNA-DNA hybrids.</text>
</comment>
<comment type="catalytic activity">
    <reaction evidence="1">
        <text>Endonucleolytic cleavage to 5'-phosphomonoester.</text>
        <dbReference type="EC" id="3.1.26.4"/>
    </reaction>
</comment>
<comment type="cofactor">
    <cofactor evidence="1">
        <name>Mg(2+)</name>
        <dbReference type="ChEBI" id="CHEBI:18420"/>
    </cofactor>
    <text evidence="1">Binds 1 Mg(2+) ion per subunit. May bind a second metal ion at a regulatory site, or after substrate binding.</text>
</comment>
<comment type="subunit">
    <text evidence="1">Monomer.</text>
</comment>
<comment type="subcellular location">
    <subcellularLocation>
        <location evidence="1">Cytoplasm</location>
    </subcellularLocation>
</comment>
<comment type="similarity">
    <text evidence="1">Belongs to the RNase H family.</text>
</comment>
<protein>
    <recommendedName>
        <fullName evidence="1">Ribonuclease H</fullName>
        <shortName evidence="1">RNase H</shortName>
        <ecNumber evidence="1">3.1.26.4</ecNumber>
    </recommendedName>
</protein>
<proteinExistence type="inferred from homology"/>
<reference key="1">
    <citation type="submission" date="2006-08" db="EMBL/GenBank/DDBJ databases">
        <title>Complete sequence of chromosome 1 of Shewanella sp. MR-7.</title>
        <authorList>
            <person name="Copeland A."/>
            <person name="Lucas S."/>
            <person name="Lapidus A."/>
            <person name="Barry K."/>
            <person name="Detter J.C."/>
            <person name="Glavina del Rio T."/>
            <person name="Hammon N."/>
            <person name="Israni S."/>
            <person name="Dalin E."/>
            <person name="Tice H."/>
            <person name="Pitluck S."/>
            <person name="Kiss H."/>
            <person name="Brettin T."/>
            <person name="Bruce D."/>
            <person name="Han C."/>
            <person name="Tapia R."/>
            <person name="Gilna P."/>
            <person name="Schmutz J."/>
            <person name="Larimer F."/>
            <person name="Land M."/>
            <person name="Hauser L."/>
            <person name="Kyrpides N."/>
            <person name="Mikhailova N."/>
            <person name="Nealson K."/>
            <person name="Konstantinidis K."/>
            <person name="Klappenbach J."/>
            <person name="Tiedje J."/>
            <person name="Richardson P."/>
        </authorList>
    </citation>
    <scope>NUCLEOTIDE SEQUENCE [LARGE SCALE GENOMIC DNA]</scope>
    <source>
        <strain>MR-7</strain>
    </source>
</reference>
<feature type="chain" id="PRO_1000074675" description="Ribonuclease H">
    <location>
        <begin position="1"/>
        <end position="158"/>
    </location>
</feature>
<feature type="domain" description="RNase H type-1" evidence="2">
    <location>
        <begin position="3"/>
        <end position="144"/>
    </location>
</feature>
<feature type="binding site" evidence="1">
    <location>
        <position position="12"/>
    </location>
    <ligand>
        <name>Mg(2+)</name>
        <dbReference type="ChEBI" id="CHEBI:18420"/>
        <label>1</label>
    </ligand>
</feature>
<feature type="binding site" evidence="1">
    <location>
        <position position="12"/>
    </location>
    <ligand>
        <name>Mg(2+)</name>
        <dbReference type="ChEBI" id="CHEBI:18420"/>
        <label>2</label>
    </ligand>
</feature>
<feature type="binding site" evidence="1">
    <location>
        <position position="50"/>
    </location>
    <ligand>
        <name>Mg(2+)</name>
        <dbReference type="ChEBI" id="CHEBI:18420"/>
        <label>1</label>
    </ligand>
</feature>
<feature type="binding site" evidence="1">
    <location>
        <position position="72"/>
    </location>
    <ligand>
        <name>Mg(2+)</name>
        <dbReference type="ChEBI" id="CHEBI:18420"/>
        <label>1</label>
    </ligand>
</feature>
<feature type="binding site" evidence="1">
    <location>
        <position position="136"/>
    </location>
    <ligand>
        <name>Mg(2+)</name>
        <dbReference type="ChEBI" id="CHEBI:18420"/>
        <label>2</label>
    </ligand>
</feature>